<feature type="chain" id="PRO_0000124894" description="Large ribosomal subunit protein uL5">
    <location>
        <begin position="1"/>
        <end position="179"/>
    </location>
</feature>
<keyword id="KW-1185">Reference proteome</keyword>
<keyword id="KW-0687">Ribonucleoprotein</keyword>
<keyword id="KW-0689">Ribosomal protein</keyword>
<keyword id="KW-0694">RNA-binding</keyword>
<keyword id="KW-0699">rRNA-binding</keyword>
<keyword id="KW-0820">tRNA-binding</keyword>
<proteinExistence type="inferred from homology"/>
<reference key="1">
    <citation type="journal article" date="2004" name="Science">
        <title>A predator unmasked: life cycle of Bdellovibrio bacteriovorus from a genomic perspective.</title>
        <authorList>
            <person name="Rendulic S."/>
            <person name="Jagtap P."/>
            <person name="Rosinus A."/>
            <person name="Eppinger M."/>
            <person name="Baar C."/>
            <person name="Lanz C."/>
            <person name="Keller H."/>
            <person name="Lambert C."/>
            <person name="Evans K.J."/>
            <person name="Goesmann A."/>
            <person name="Meyer F."/>
            <person name="Sockett R.E."/>
            <person name="Schuster S.C."/>
        </authorList>
    </citation>
    <scope>NUCLEOTIDE SEQUENCE [LARGE SCALE GENOMIC DNA]</scope>
    <source>
        <strain>ATCC 15356 / DSM 50701 / NCIMB 9529 / HD100</strain>
    </source>
</reference>
<name>RL5_BDEBA</name>
<dbReference type="EMBL" id="BX842654">
    <property type="protein sequence ID" value="CAE80737.1"/>
    <property type="molecule type" value="Genomic_DNA"/>
</dbReference>
<dbReference type="RefSeq" id="WP_011165341.1">
    <property type="nucleotide sequence ID" value="NC_005363.1"/>
</dbReference>
<dbReference type="SMR" id="Q6MJ25"/>
<dbReference type="STRING" id="264462.Bd2964"/>
<dbReference type="GeneID" id="93013828"/>
<dbReference type="KEGG" id="bba:Bd2964"/>
<dbReference type="eggNOG" id="COG0094">
    <property type="taxonomic scope" value="Bacteria"/>
</dbReference>
<dbReference type="HOGENOM" id="CLU_061015_2_1_7"/>
<dbReference type="Proteomes" id="UP000008080">
    <property type="component" value="Chromosome"/>
</dbReference>
<dbReference type="GO" id="GO:1990904">
    <property type="term" value="C:ribonucleoprotein complex"/>
    <property type="evidence" value="ECO:0007669"/>
    <property type="project" value="UniProtKB-KW"/>
</dbReference>
<dbReference type="GO" id="GO:0005840">
    <property type="term" value="C:ribosome"/>
    <property type="evidence" value="ECO:0007669"/>
    <property type="project" value="UniProtKB-KW"/>
</dbReference>
<dbReference type="GO" id="GO:0019843">
    <property type="term" value="F:rRNA binding"/>
    <property type="evidence" value="ECO:0007669"/>
    <property type="project" value="UniProtKB-UniRule"/>
</dbReference>
<dbReference type="GO" id="GO:0003735">
    <property type="term" value="F:structural constituent of ribosome"/>
    <property type="evidence" value="ECO:0007669"/>
    <property type="project" value="InterPro"/>
</dbReference>
<dbReference type="GO" id="GO:0000049">
    <property type="term" value="F:tRNA binding"/>
    <property type="evidence" value="ECO:0007669"/>
    <property type="project" value="UniProtKB-UniRule"/>
</dbReference>
<dbReference type="GO" id="GO:0006412">
    <property type="term" value="P:translation"/>
    <property type="evidence" value="ECO:0007669"/>
    <property type="project" value="UniProtKB-UniRule"/>
</dbReference>
<dbReference type="FunFam" id="3.30.1440.10:FF:000001">
    <property type="entry name" value="50S ribosomal protein L5"/>
    <property type="match status" value="1"/>
</dbReference>
<dbReference type="Gene3D" id="3.30.1440.10">
    <property type="match status" value="1"/>
</dbReference>
<dbReference type="HAMAP" id="MF_01333_B">
    <property type="entry name" value="Ribosomal_uL5_B"/>
    <property type="match status" value="1"/>
</dbReference>
<dbReference type="InterPro" id="IPR002132">
    <property type="entry name" value="Ribosomal_uL5"/>
</dbReference>
<dbReference type="InterPro" id="IPR020930">
    <property type="entry name" value="Ribosomal_uL5_bac-type"/>
</dbReference>
<dbReference type="InterPro" id="IPR031309">
    <property type="entry name" value="Ribosomal_uL5_C"/>
</dbReference>
<dbReference type="InterPro" id="IPR020929">
    <property type="entry name" value="Ribosomal_uL5_CS"/>
</dbReference>
<dbReference type="InterPro" id="IPR022803">
    <property type="entry name" value="Ribosomal_uL5_dom_sf"/>
</dbReference>
<dbReference type="InterPro" id="IPR031310">
    <property type="entry name" value="Ribosomal_uL5_N"/>
</dbReference>
<dbReference type="NCBIfam" id="NF000585">
    <property type="entry name" value="PRK00010.1"/>
    <property type="match status" value="1"/>
</dbReference>
<dbReference type="PANTHER" id="PTHR11994">
    <property type="entry name" value="60S RIBOSOMAL PROTEIN L11-RELATED"/>
    <property type="match status" value="1"/>
</dbReference>
<dbReference type="Pfam" id="PF00281">
    <property type="entry name" value="Ribosomal_L5"/>
    <property type="match status" value="1"/>
</dbReference>
<dbReference type="Pfam" id="PF00673">
    <property type="entry name" value="Ribosomal_L5_C"/>
    <property type="match status" value="1"/>
</dbReference>
<dbReference type="PIRSF" id="PIRSF002161">
    <property type="entry name" value="Ribosomal_L5"/>
    <property type="match status" value="1"/>
</dbReference>
<dbReference type="SUPFAM" id="SSF55282">
    <property type="entry name" value="RL5-like"/>
    <property type="match status" value="1"/>
</dbReference>
<dbReference type="PROSITE" id="PS00358">
    <property type="entry name" value="RIBOSOMAL_L5"/>
    <property type="match status" value="1"/>
</dbReference>
<sequence length="179" mass="20227">MNRLHTRYNKEIAPALKNQLGVKNVMQVPRLEKITLSVCLSEAVQNPKILNTVVDEITAITGQKAVITKAKKAISNFKLRAGIPLGVRVTLRREKMWSFMDRLNTLALPRVRDFRGLPNKGFDGRGNYNMGLKEQIVFPEINYDKVDKTRGMNITICTTAKNDTEGRALLEALGMPFRK</sequence>
<organism>
    <name type="scientific">Bdellovibrio bacteriovorus (strain ATCC 15356 / DSM 50701 / NCIMB 9529 / HD100)</name>
    <dbReference type="NCBI Taxonomy" id="264462"/>
    <lineage>
        <taxon>Bacteria</taxon>
        <taxon>Pseudomonadati</taxon>
        <taxon>Bdellovibrionota</taxon>
        <taxon>Bdellovibrionia</taxon>
        <taxon>Bdellovibrionales</taxon>
        <taxon>Pseudobdellovibrionaceae</taxon>
        <taxon>Bdellovibrio</taxon>
    </lineage>
</organism>
<protein>
    <recommendedName>
        <fullName evidence="1">Large ribosomal subunit protein uL5</fullName>
    </recommendedName>
    <alternativeName>
        <fullName evidence="2">50S ribosomal protein L5</fullName>
    </alternativeName>
</protein>
<comment type="function">
    <text evidence="1">This is one of the proteins that bind and probably mediate the attachment of the 5S RNA into the large ribosomal subunit, where it forms part of the central protuberance. In the 70S ribosome it contacts protein S13 of the 30S subunit (bridge B1b), connecting the 2 subunits; this bridge is implicated in subunit movement. Contacts the P site tRNA; the 5S rRNA and some of its associated proteins might help stabilize positioning of ribosome-bound tRNAs.</text>
</comment>
<comment type="subunit">
    <text evidence="1">Part of the 50S ribosomal subunit; part of the 5S rRNA/L5/L18/L25 subcomplex. Contacts the 5S rRNA and the P site tRNA. Forms a bridge to the 30S subunit in the 70S ribosome.</text>
</comment>
<comment type="similarity">
    <text evidence="1">Belongs to the universal ribosomal protein uL5 family.</text>
</comment>
<gene>
    <name evidence="1" type="primary">rplE</name>
    <name type="ordered locus">Bd2964</name>
</gene>
<accession>Q6MJ25</accession>
<evidence type="ECO:0000255" key="1">
    <source>
        <dbReference type="HAMAP-Rule" id="MF_01333"/>
    </source>
</evidence>
<evidence type="ECO:0000305" key="2"/>